<proteinExistence type="evidence at protein level"/>
<accession>P83709</accession>
<reference key="1">
    <citation type="journal article" date="2004" name="Microbiology">
        <title>Regulation of catabolic enzymes during long-term exposure of Delftia acidovorans MC1 to chlorophenoxy herbicides.</title>
        <authorList>
            <person name="Benndorf D."/>
            <person name="Davidson I."/>
            <person name="Babel W."/>
        </authorList>
    </citation>
    <scope>PROTEIN SEQUENCE</scope>
    <scope>INDUCTION</scope>
    <source>
        <strain>MC1</strain>
    </source>
</reference>
<evidence type="ECO:0000250" key="1"/>
<evidence type="ECO:0000269" key="2">
    <source>
    </source>
</evidence>
<evidence type="ECO:0000305" key="3"/>
<organism>
    <name type="scientific">Delftia acidovorans</name>
    <name type="common">Pseudomonas acidovorans</name>
    <name type="synonym">Comamonas acidovorans</name>
    <dbReference type="NCBI Taxonomy" id="80866"/>
    <lineage>
        <taxon>Bacteria</taxon>
        <taxon>Pseudomonadati</taxon>
        <taxon>Pseudomonadota</taxon>
        <taxon>Betaproteobacteria</taxon>
        <taxon>Burkholderiales</taxon>
        <taxon>Comamonadaceae</taxon>
        <taxon>Delftia</taxon>
    </lineage>
</organism>
<comment type="function">
    <text evidence="1">Acts as a chaperone.</text>
</comment>
<comment type="induction">
    <text evidence="2">By stress conditions e.g. heat shock, and by the herbicide dichlorprop [(R)-2-(2,4-dichlorophenoxy)propionate].</text>
</comment>
<comment type="similarity">
    <text evidence="3">Belongs to the heat shock protein 70 family.</text>
</comment>
<keyword id="KW-0067">ATP-binding</keyword>
<keyword id="KW-0143">Chaperone</keyword>
<keyword id="KW-0903">Direct protein sequencing</keyword>
<keyword id="KW-0547">Nucleotide-binding</keyword>
<keyword id="KW-0346">Stress response</keyword>
<dbReference type="GO" id="GO:0005524">
    <property type="term" value="F:ATP binding"/>
    <property type="evidence" value="ECO:0007669"/>
    <property type="project" value="UniProtKB-KW"/>
</dbReference>
<dbReference type="InterPro" id="IPR018181">
    <property type="entry name" value="Heat_shock_70_CS"/>
</dbReference>
<dbReference type="PROSITE" id="PS00297">
    <property type="entry name" value="HSP70_1"/>
    <property type="match status" value="1"/>
</dbReference>
<gene>
    <name type="primary">dnaK</name>
</gene>
<feature type="chain" id="PRO_0000078452" description="Chaperone protein DnaK">
    <location>
        <begin position="1"/>
        <end position="15" status="greater than"/>
    </location>
</feature>
<feature type="non-terminal residue">
    <location>
        <position position="15"/>
    </location>
</feature>
<name>DNAK_DELAC</name>
<protein>
    <recommendedName>
        <fullName>Chaperone protein DnaK</fullName>
    </recommendedName>
    <alternativeName>
        <fullName>HSP70</fullName>
    </alternativeName>
    <alternativeName>
        <fullName>Heat shock 70 kDa protein</fullName>
    </alternativeName>
    <alternativeName>
        <fullName>Heat shock protein 70</fullName>
    </alternativeName>
</protein>
<sequence length="15" mass="1513">KIIGIDLGTTNSXVA</sequence>